<evidence type="ECO:0000255" key="1"/>
<evidence type="ECO:0000256" key="2">
    <source>
        <dbReference type="SAM" id="MobiDB-lite"/>
    </source>
</evidence>
<evidence type="ECO:0000269" key="3">
    <source>
    </source>
</evidence>
<evidence type="ECO:0000305" key="4"/>
<sequence length="172" mass="18504">MKLTKLWLLFVCLGLFVTLVVSADTDSDADSDSSADSDSSADSDENTTASGSIVTSTTESSATNSSGSSDDASGSSSDVDDGSDDDTDSGSDTDYDTPTTAPVVKKRANRKKANNNKKRASNNRKKANNNNNNKKRANSNNNRKRRASNNNNKKKASNNNNRRRNNNSRRRG</sequence>
<name>PIG1_DROME</name>
<comment type="tissue specificity">
    <text evidence="3">Low expression in first to third instar larvae salivary glands.</text>
</comment>
<comment type="developmental stage">
    <text>Throughout the larval period.</text>
</comment>
<comment type="sequence caution" evidence="4">
    <conflict type="frameshift">
        <sequence resource="EMBL-CDS" id="AAA07070"/>
    </conflict>
</comment>
<comment type="sequence caution" evidence="4">
    <conflict type="erroneous gene model prediction">
        <sequence resource="EMBL-CDS" id="AAA28893"/>
    </conflict>
</comment>
<comment type="sequence caution" evidence="4">
    <conflict type="erroneous translation">
        <sequence resource="EMBL-CDS" id="AAL28436"/>
    </conflict>
    <text>Wrong choice of frame.</text>
</comment>
<comment type="sequence caution" evidence="4">
    <conflict type="frameshift">
        <sequence resource="EMBL-CDS" id="CAA33767"/>
    </conflict>
</comment>
<proteinExistence type="evidence at transcript level"/>
<keyword id="KW-1185">Reference proteome</keyword>
<keyword id="KW-0677">Repeat</keyword>
<keyword id="KW-0732">Signal</keyword>
<gene>
    <name type="primary">Pig1</name>
    <name type="synonym">gsg</name>
    <name type="synonym">Pig-1</name>
    <name type="ORF">CG10790</name>
</gene>
<protein>
    <recommendedName>
        <fullName>Pre-intermoult gene 1 protein</fullName>
    </recommendedName>
    <alternativeName>
        <fullName>Gland-specific protein</fullName>
    </alternativeName>
</protein>
<feature type="signal peptide" evidence="1">
    <location>
        <begin position="1"/>
        <end position="22"/>
    </location>
</feature>
<feature type="chain" id="PRO_0000022061" description="Pre-intermoult gene 1 protein">
    <location>
        <begin position="23"/>
        <end position="172"/>
    </location>
</feature>
<feature type="repeat" description="1">
    <location>
        <begin position="27"/>
        <end position="32"/>
    </location>
</feature>
<feature type="repeat" description="2">
    <location>
        <begin position="33"/>
        <end position="38"/>
    </location>
</feature>
<feature type="repeat" description="3">
    <location>
        <begin position="39"/>
        <end position="44"/>
    </location>
</feature>
<feature type="region of interest" description="Disordered" evidence="2">
    <location>
        <begin position="25"/>
        <end position="172"/>
    </location>
</feature>
<feature type="region of interest" description="3 X 6 AA tandem repeats of S-S-A-D-S-D">
    <location>
        <begin position="27"/>
        <end position="44"/>
    </location>
</feature>
<feature type="compositionally biased region" description="Acidic residues" evidence="2">
    <location>
        <begin position="25"/>
        <end position="45"/>
    </location>
</feature>
<feature type="compositionally biased region" description="Low complexity" evidence="2">
    <location>
        <begin position="55"/>
        <end position="77"/>
    </location>
</feature>
<feature type="compositionally biased region" description="Acidic residues" evidence="2">
    <location>
        <begin position="78"/>
        <end position="95"/>
    </location>
</feature>
<feature type="compositionally biased region" description="Basic residues" evidence="2">
    <location>
        <begin position="104"/>
        <end position="172"/>
    </location>
</feature>
<feature type="sequence conflict" description="In Ref. 1; AAA28893, 2; AAA07070 and 5; CAA19669." evidence="4" ref="1 2 5">
    <location>
        <begin position="39"/>
        <end position="44"/>
    </location>
</feature>
<feature type="sequence conflict" description="In Ref. 1; AAA28893 and 2; AAA07070." evidence="4" ref="1 2">
    <original>I</original>
    <variation>R</variation>
    <location>
        <position position="53"/>
    </location>
</feature>
<feature type="sequence conflict" description="In Ref. 5; CAA19669." evidence="4" ref="5">
    <original>I</original>
    <variation>T</variation>
    <location>
        <position position="53"/>
    </location>
</feature>
<feature type="sequence conflict" description="In Ref. 1; AAA28893, 2; AAA07070 and 5; CAA19669." evidence="4" ref="1 2 5">
    <original>A</original>
    <variation>AN</variation>
    <location>
        <position position="127"/>
    </location>
</feature>
<feature type="sequence conflict" description="In Ref. 2; AAA07070 and 5; CAA19669." evidence="4" ref="2 5">
    <original>N</original>
    <variation>NS</variation>
    <location>
        <position position="160"/>
    </location>
</feature>
<accession>P26023</accession>
<accession>C9QP90</accession>
<accession>O76914</accession>
<accession>Q24519</accession>
<accession>Q3Y420</accession>
<accession>Q95SA5</accession>
<accession>Q9W4T3</accession>
<dbReference type="EMBL" id="M24138">
    <property type="protein sequence ID" value="AAA28893.1"/>
    <property type="status" value="ALT_SEQ"/>
    <property type="molecule type" value="Genomic_DNA"/>
</dbReference>
<dbReference type="EMBL" id="S77478">
    <property type="protein sequence ID" value="AAA07070.1"/>
    <property type="status" value="ALT_FRAME"/>
    <property type="molecule type" value="mRNA"/>
</dbReference>
<dbReference type="EMBL" id="X15760">
    <property type="protein sequence ID" value="CAA33767.1"/>
    <property type="status" value="ALT_FRAME"/>
    <property type="molecule type" value="mRNA"/>
</dbReference>
<dbReference type="EMBL" id="AE014298">
    <property type="protein sequence ID" value="AAF45859.2"/>
    <property type="molecule type" value="Genomic_DNA"/>
</dbReference>
<dbReference type="EMBL" id="AL024484">
    <property type="protein sequence ID" value="CAA19669.1"/>
    <property type="molecule type" value="Genomic_DNA"/>
</dbReference>
<dbReference type="EMBL" id="AY060888">
    <property type="protein sequence ID" value="AAL28436.1"/>
    <property type="status" value="ALT_SEQ"/>
    <property type="molecule type" value="mRNA"/>
</dbReference>
<dbReference type="EMBL" id="BT099972">
    <property type="protein sequence ID" value="ACX53653.1"/>
    <property type="molecule type" value="mRNA"/>
</dbReference>
<dbReference type="PIR" id="A56579">
    <property type="entry name" value="A56579"/>
</dbReference>
<dbReference type="RefSeq" id="NP_476677.2">
    <property type="nucleotide sequence ID" value="NM_057329.4"/>
</dbReference>
<dbReference type="SMR" id="P26023"/>
<dbReference type="BioGRID" id="57831">
    <property type="interactions" value="5"/>
</dbReference>
<dbReference type="IntAct" id="P26023">
    <property type="interactions" value="5"/>
</dbReference>
<dbReference type="STRING" id="7227.FBpp0070512"/>
<dbReference type="PaxDb" id="7227-FBpp0070512"/>
<dbReference type="DNASU" id="31303"/>
<dbReference type="EnsemblMetazoa" id="FBtr0070537">
    <property type="protein sequence ID" value="FBpp0070512"/>
    <property type="gene ID" value="FBgn0003086"/>
</dbReference>
<dbReference type="GeneID" id="31303"/>
<dbReference type="KEGG" id="dme:Dmel_CG10790"/>
<dbReference type="AGR" id="FB:FBgn0003086"/>
<dbReference type="CTD" id="31303"/>
<dbReference type="FlyBase" id="FBgn0003086">
    <property type="gene designation" value="Pig1"/>
</dbReference>
<dbReference type="VEuPathDB" id="VectorBase:FBgn0003086"/>
<dbReference type="HOGENOM" id="CLU_110400_0_0_1"/>
<dbReference type="InParanoid" id="P26023"/>
<dbReference type="OMA" id="CLGMCLA"/>
<dbReference type="BioGRID-ORCS" id="31303">
    <property type="hits" value="0 hits in 1 CRISPR screen"/>
</dbReference>
<dbReference type="GenomeRNAi" id="31303"/>
<dbReference type="PRO" id="PR:P26023"/>
<dbReference type="Proteomes" id="UP000000803">
    <property type="component" value="Chromosome X"/>
</dbReference>
<dbReference type="Bgee" id="FBgn0003086">
    <property type="expression patterns" value="Expressed in saliva-secreting gland and 13 other cell types or tissues"/>
</dbReference>
<organism>
    <name type="scientific">Drosophila melanogaster</name>
    <name type="common">Fruit fly</name>
    <dbReference type="NCBI Taxonomy" id="7227"/>
    <lineage>
        <taxon>Eukaryota</taxon>
        <taxon>Metazoa</taxon>
        <taxon>Ecdysozoa</taxon>
        <taxon>Arthropoda</taxon>
        <taxon>Hexapoda</taxon>
        <taxon>Insecta</taxon>
        <taxon>Pterygota</taxon>
        <taxon>Neoptera</taxon>
        <taxon>Endopterygota</taxon>
        <taxon>Diptera</taxon>
        <taxon>Brachycera</taxon>
        <taxon>Muscomorpha</taxon>
        <taxon>Ephydroidea</taxon>
        <taxon>Drosophilidae</taxon>
        <taxon>Drosophila</taxon>
        <taxon>Sophophora</taxon>
    </lineage>
</organism>
<reference key="1">
    <citation type="journal article" date="1987" name="Chromosoma">
        <title>Upstream sequences of dosage-compensated and non-compensated alleles of the larval secretion protein gene Sgs-4 in Drosophila.</title>
        <authorList>
            <person name="Hofmann A."/>
            <person name="Korge G."/>
        </authorList>
    </citation>
    <scope>NUCLEOTIDE SEQUENCE [GENOMIC DNA]</scope>
    <scope>TISSUE SPECIFICITY</scope>
    <source>
        <strain>Karsnas</strain>
        <strain>Oregon-R</strain>
        <strain>Samarkand</strain>
    </source>
</reference>
<reference key="2">
    <citation type="journal article" date="1991" name="Chromosoma">
        <title>Molecular organization of the Drosophila melanogaster Pig-1 gene.</title>
        <authorList>
            <person name="Furia M."/>
            <person name="Digilio F.A."/>
            <person name="Artiaco D."/>
            <person name="D'Avino P.P."/>
            <person name="Cavaliere D."/>
            <person name="Polito L.C."/>
        </authorList>
    </citation>
    <scope>NUCLEOTIDE SEQUENCE [MRNA]</scope>
    <source>
        <strain>Canton-S</strain>
    </source>
</reference>
<reference key="3">
    <citation type="journal article" date="2000" name="Science">
        <title>The genome sequence of Drosophila melanogaster.</title>
        <authorList>
            <person name="Adams M.D."/>
            <person name="Celniker S.E."/>
            <person name="Holt R.A."/>
            <person name="Evans C.A."/>
            <person name="Gocayne J.D."/>
            <person name="Amanatides P.G."/>
            <person name="Scherer S.E."/>
            <person name="Li P.W."/>
            <person name="Hoskins R.A."/>
            <person name="Galle R.F."/>
            <person name="George R.A."/>
            <person name="Lewis S.E."/>
            <person name="Richards S."/>
            <person name="Ashburner M."/>
            <person name="Henderson S.N."/>
            <person name="Sutton G.G."/>
            <person name="Wortman J.R."/>
            <person name="Yandell M.D."/>
            <person name="Zhang Q."/>
            <person name="Chen L.X."/>
            <person name="Brandon R.C."/>
            <person name="Rogers Y.-H.C."/>
            <person name="Blazej R.G."/>
            <person name="Champe M."/>
            <person name="Pfeiffer B.D."/>
            <person name="Wan K.H."/>
            <person name="Doyle C."/>
            <person name="Baxter E.G."/>
            <person name="Helt G."/>
            <person name="Nelson C.R."/>
            <person name="Miklos G.L.G."/>
            <person name="Abril J.F."/>
            <person name="Agbayani A."/>
            <person name="An H.-J."/>
            <person name="Andrews-Pfannkoch C."/>
            <person name="Baldwin D."/>
            <person name="Ballew R.M."/>
            <person name="Basu A."/>
            <person name="Baxendale J."/>
            <person name="Bayraktaroglu L."/>
            <person name="Beasley E.M."/>
            <person name="Beeson K.Y."/>
            <person name="Benos P.V."/>
            <person name="Berman B.P."/>
            <person name="Bhandari D."/>
            <person name="Bolshakov S."/>
            <person name="Borkova D."/>
            <person name="Botchan M.R."/>
            <person name="Bouck J."/>
            <person name="Brokstein P."/>
            <person name="Brottier P."/>
            <person name="Burtis K.C."/>
            <person name="Busam D.A."/>
            <person name="Butler H."/>
            <person name="Cadieu E."/>
            <person name="Center A."/>
            <person name="Chandra I."/>
            <person name="Cherry J.M."/>
            <person name="Cawley S."/>
            <person name="Dahlke C."/>
            <person name="Davenport L.B."/>
            <person name="Davies P."/>
            <person name="de Pablos B."/>
            <person name="Delcher A."/>
            <person name="Deng Z."/>
            <person name="Mays A.D."/>
            <person name="Dew I."/>
            <person name="Dietz S.M."/>
            <person name="Dodson K."/>
            <person name="Doup L.E."/>
            <person name="Downes M."/>
            <person name="Dugan-Rocha S."/>
            <person name="Dunkov B.C."/>
            <person name="Dunn P."/>
            <person name="Durbin K.J."/>
            <person name="Evangelista C.C."/>
            <person name="Ferraz C."/>
            <person name="Ferriera S."/>
            <person name="Fleischmann W."/>
            <person name="Fosler C."/>
            <person name="Gabrielian A.E."/>
            <person name="Garg N.S."/>
            <person name="Gelbart W.M."/>
            <person name="Glasser K."/>
            <person name="Glodek A."/>
            <person name="Gong F."/>
            <person name="Gorrell J.H."/>
            <person name="Gu Z."/>
            <person name="Guan P."/>
            <person name="Harris M."/>
            <person name="Harris N.L."/>
            <person name="Harvey D.A."/>
            <person name="Heiman T.J."/>
            <person name="Hernandez J.R."/>
            <person name="Houck J."/>
            <person name="Hostin D."/>
            <person name="Houston K.A."/>
            <person name="Howland T.J."/>
            <person name="Wei M.-H."/>
            <person name="Ibegwam C."/>
            <person name="Jalali M."/>
            <person name="Kalush F."/>
            <person name="Karpen G.H."/>
            <person name="Ke Z."/>
            <person name="Kennison J.A."/>
            <person name="Ketchum K.A."/>
            <person name="Kimmel B.E."/>
            <person name="Kodira C.D."/>
            <person name="Kraft C.L."/>
            <person name="Kravitz S."/>
            <person name="Kulp D."/>
            <person name="Lai Z."/>
            <person name="Lasko P."/>
            <person name="Lei Y."/>
            <person name="Levitsky A.A."/>
            <person name="Li J.H."/>
            <person name="Li Z."/>
            <person name="Liang Y."/>
            <person name="Lin X."/>
            <person name="Liu X."/>
            <person name="Mattei B."/>
            <person name="McIntosh T.C."/>
            <person name="McLeod M.P."/>
            <person name="McPherson D."/>
            <person name="Merkulov G."/>
            <person name="Milshina N.V."/>
            <person name="Mobarry C."/>
            <person name="Morris J."/>
            <person name="Moshrefi A."/>
            <person name="Mount S.M."/>
            <person name="Moy M."/>
            <person name="Murphy B."/>
            <person name="Murphy L."/>
            <person name="Muzny D.M."/>
            <person name="Nelson D.L."/>
            <person name="Nelson D.R."/>
            <person name="Nelson K.A."/>
            <person name="Nixon K."/>
            <person name="Nusskern D.R."/>
            <person name="Pacleb J.M."/>
            <person name="Palazzolo M."/>
            <person name="Pittman G.S."/>
            <person name="Pan S."/>
            <person name="Pollard J."/>
            <person name="Puri V."/>
            <person name="Reese M.G."/>
            <person name="Reinert K."/>
            <person name="Remington K."/>
            <person name="Saunders R.D.C."/>
            <person name="Scheeler F."/>
            <person name="Shen H."/>
            <person name="Shue B.C."/>
            <person name="Siden-Kiamos I."/>
            <person name="Simpson M."/>
            <person name="Skupski M.P."/>
            <person name="Smith T.J."/>
            <person name="Spier E."/>
            <person name="Spradling A.C."/>
            <person name="Stapleton M."/>
            <person name="Strong R."/>
            <person name="Sun E."/>
            <person name="Svirskas R."/>
            <person name="Tector C."/>
            <person name="Turner R."/>
            <person name="Venter E."/>
            <person name="Wang A.H."/>
            <person name="Wang X."/>
            <person name="Wang Z.-Y."/>
            <person name="Wassarman D.A."/>
            <person name="Weinstock G.M."/>
            <person name="Weissenbach J."/>
            <person name="Williams S.M."/>
            <person name="Woodage T."/>
            <person name="Worley K.C."/>
            <person name="Wu D."/>
            <person name="Yang S."/>
            <person name="Yao Q.A."/>
            <person name="Ye J."/>
            <person name="Yeh R.-F."/>
            <person name="Zaveri J.S."/>
            <person name="Zhan M."/>
            <person name="Zhang G."/>
            <person name="Zhao Q."/>
            <person name="Zheng L."/>
            <person name="Zheng X.H."/>
            <person name="Zhong F.N."/>
            <person name="Zhong W."/>
            <person name="Zhou X."/>
            <person name="Zhu S.C."/>
            <person name="Zhu X."/>
            <person name="Smith H.O."/>
            <person name="Gibbs R.A."/>
            <person name="Myers E.W."/>
            <person name="Rubin G.M."/>
            <person name="Venter J.C."/>
        </authorList>
    </citation>
    <scope>NUCLEOTIDE SEQUENCE [LARGE SCALE GENOMIC DNA]</scope>
    <source>
        <strain>Berkeley</strain>
    </source>
</reference>
<reference key="4">
    <citation type="journal article" date="2002" name="Genome Biol.">
        <title>Annotation of the Drosophila melanogaster euchromatic genome: a systematic review.</title>
        <authorList>
            <person name="Misra S."/>
            <person name="Crosby M.A."/>
            <person name="Mungall C.J."/>
            <person name="Matthews B.B."/>
            <person name="Campbell K.S."/>
            <person name="Hradecky P."/>
            <person name="Huang Y."/>
            <person name="Kaminker J.S."/>
            <person name="Millburn G.H."/>
            <person name="Prochnik S.E."/>
            <person name="Smith C.D."/>
            <person name="Tupy J.L."/>
            <person name="Whitfield E.J."/>
            <person name="Bayraktaroglu L."/>
            <person name="Berman B.P."/>
            <person name="Bettencourt B.R."/>
            <person name="Celniker S.E."/>
            <person name="de Grey A.D.N.J."/>
            <person name="Drysdale R.A."/>
            <person name="Harris N.L."/>
            <person name="Richter J."/>
            <person name="Russo S."/>
            <person name="Schroeder A.J."/>
            <person name="Shu S.Q."/>
            <person name="Stapleton M."/>
            <person name="Yamada C."/>
            <person name="Ashburner M."/>
            <person name="Gelbart W.M."/>
            <person name="Rubin G.M."/>
            <person name="Lewis S.E."/>
        </authorList>
    </citation>
    <scope>GENOME REANNOTATION</scope>
    <source>
        <strain>Berkeley</strain>
    </source>
</reference>
<reference key="5">
    <citation type="journal article" date="2000" name="Science">
        <title>From sequence to chromosome: the tip of the X chromosome of D. melanogaster.</title>
        <authorList>
            <person name="Benos P.V."/>
            <person name="Gatt M.K."/>
            <person name="Ashburner M."/>
            <person name="Murphy L."/>
            <person name="Harris D."/>
            <person name="Barrell B.G."/>
            <person name="Ferraz C."/>
            <person name="Vidal S."/>
            <person name="Brun C."/>
            <person name="Demailles J."/>
            <person name="Cadieu E."/>
            <person name="Dreano S."/>
            <person name="Gloux S."/>
            <person name="Lelaure V."/>
            <person name="Mottier S."/>
            <person name="Galibert F."/>
            <person name="Borkova D."/>
            <person name="Minana B."/>
            <person name="Kafatos F.C."/>
            <person name="Louis C."/>
            <person name="Siden-Kiamos I."/>
            <person name="Bolshakov S."/>
            <person name="Papagiannakis G."/>
            <person name="Spanos L."/>
            <person name="Cox S."/>
            <person name="Madueno E."/>
            <person name="de Pablos B."/>
            <person name="Modolell J."/>
            <person name="Peter A."/>
            <person name="Schoettler P."/>
            <person name="Werner M."/>
            <person name="Mourkioti F."/>
            <person name="Beinert N."/>
            <person name="Dowe G."/>
            <person name="Schaefer U."/>
            <person name="Jaeckle H."/>
            <person name="Bucheton A."/>
            <person name="Callister D.M."/>
            <person name="Campbell L.A."/>
            <person name="Darlamitsou A."/>
            <person name="Henderson N.S."/>
            <person name="McMillan P.J."/>
            <person name="Salles C."/>
            <person name="Tait E.A."/>
            <person name="Valenti P."/>
            <person name="Saunders R.D.C."/>
            <person name="Glover D.M."/>
        </authorList>
    </citation>
    <scope>NUCLEOTIDE SEQUENCE [LARGE SCALE GENOMIC DNA]</scope>
    <source>
        <strain>Oregon-R</strain>
    </source>
</reference>
<reference key="6">
    <citation type="journal article" date="2002" name="Genome Biol.">
        <title>A Drosophila full-length cDNA resource.</title>
        <authorList>
            <person name="Stapleton M."/>
            <person name="Carlson J.W."/>
            <person name="Brokstein P."/>
            <person name="Yu C."/>
            <person name="Champe M."/>
            <person name="George R.A."/>
            <person name="Guarin H."/>
            <person name="Kronmiller B."/>
            <person name="Pacleb J.M."/>
            <person name="Park S."/>
            <person name="Wan K.H."/>
            <person name="Rubin G.M."/>
            <person name="Celniker S.E."/>
        </authorList>
    </citation>
    <scope>NUCLEOTIDE SEQUENCE [LARGE SCALE MRNA]</scope>
    <source>
        <strain>Berkeley</strain>
        <tissue>Ovary</tissue>
    </source>
</reference>
<reference key="7">
    <citation type="submission" date="2009-10" db="EMBL/GenBank/DDBJ databases">
        <authorList>
            <person name="Carlson J."/>
            <person name="Booth B."/>
            <person name="Frise E."/>
            <person name="Park S."/>
            <person name="Wan K."/>
            <person name="Yu C."/>
            <person name="Celniker S."/>
        </authorList>
    </citation>
    <scope>NUCLEOTIDE SEQUENCE [LARGE SCALE MRNA]</scope>
    <source>
        <strain>Berkeley</strain>
    </source>
</reference>